<evidence type="ECO:0000255" key="1">
    <source>
        <dbReference type="HAMAP-Rule" id="MF_00145"/>
    </source>
</evidence>
<organism>
    <name type="scientific">Xanthomonas campestris pv. campestris (strain B100)</name>
    <dbReference type="NCBI Taxonomy" id="509169"/>
    <lineage>
        <taxon>Bacteria</taxon>
        <taxon>Pseudomonadati</taxon>
        <taxon>Pseudomonadota</taxon>
        <taxon>Gammaproteobacteria</taxon>
        <taxon>Lysobacterales</taxon>
        <taxon>Lysobacteraceae</taxon>
        <taxon>Xanthomonas</taxon>
    </lineage>
</organism>
<proteinExistence type="inferred from homology"/>
<keyword id="KW-0067">ATP-binding</keyword>
<keyword id="KW-0963">Cytoplasm</keyword>
<keyword id="KW-0324">Glycolysis</keyword>
<keyword id="KW-0418">Kinase</keyword>
<keyword id="KW-0547">Nucleotide-binding</keyword>
<keyword id="KW-0808">Transferase</keyword>
<gene>
    <name evidence="1" type="primary">pgk</name>
    <name type="ordered locus">xcc-b100_0988</name>
</gene>
<name>PGK_XANCB</name>
<accession>B0RPF1</accession>
<dbReference type="EC" id="2.7.2.3" evidence="1"/>
<dbReference type="EMBL" id="AM920689">
    <property type="protein sequence ID" value="CAP50336.1"/>
    <property type="molecule type" value="Genomic_DNA"/>
</dbReference>
<dbReference type="SMR" id="B0RPF1"/>
<dbReference type="KEGG" id="xca:xcc-b100_0988"/>
<dbReference type="HOGENOM" id="CLU_025427_0_2_6"/>
<dbReference type="UniPathway" id="UPA00109">
    <property type="reaction ID" value="UER00185"/>
</dbReference>
<dbReference type="Proteomes" id="UP000001188">
    <property type="component" value="Chromosome"/>
</dbReference>
<dbReference type="GO" id="GO:0005829">
    <property type="term" value="C:cytosol"/>
    <property type="evidence" value="ECO:0007669"/>
    <property type="project" value="TreeGrafter"/>
</dbReference>
<dbReference type="GO" id="GO:0043531">
    <property type="term" value="F:ADP binding"/>
    <property type="evidence" value="ECO:0007669"/>
    <property type="project" value="TreeGrafter"/>
</dbReference>
<dbReference type="GO" id="GO:0005524">
    <property type="term" value="F:ATP binding"/>
    <property type="evidence" value="ECO:0007669"/>
    <property type="project" value="UniProtKB-KW"/>
</dbReference>
<dbReference type="GO" id="GO:0004618">
    <property type="term" value="F:phosphoglycerate kinase activity"/>
    <property type="evidence" value="ECO:0007669"/>
    <property type="project" value="UniProtKB-UniRule"/>
</dbReference>
<dbReference type="GO" id="GO:0006094">
    <property type="term" value="P:gluconeogenesis"/>
    <property type="evidence" value="ECO:0007669"/>
    <property type="project" value="TreeGrafter"/>
</dbReference>
<dbReference type="GO" id="GO:0006096">
    <property type="term" value="P:glycolytic process"/>
    <property type="evidence" value="ECO:0007669"/>
    <property type="project" value="UniProtKB-UniRule"/>
</dbReference>
<dbReference type="FunFam" id="3.40.50.1260:FF:000001">
    <property type="entry name" value="Phosphoglycerate kinase"/>
    <property type="match status" value="1"/>
</dbReference>
<dbReference type="FunFam" id="3.40.50.1260:FF:000002">
    <property type="entry name" value="Phosphoglycerate kinase"/>
    <property type="match status" value="1"/>
</dbReference>
<dbReference type="Gene3D" id="3.40.50.1260">
    <property type="entry name" value="Phosphoglycerate kinase, N-terminal domain"/>
    <property type="match status" value="2"/>
</dbReference>
<dbReference type="HAMAP" id="MF_00145">
    <property type="entry name" value="Phosphoglyc_kinase"/>
    <property type="match status" value="1"/>
</dbReference>
<dbReference type="InterPro" id="IPR001576">
    <property type="entry name" value="Phosphoglycerate_kinase"/>
</dbReference>
<dbReference type="InterPro" id="IPR015911">
    <property type="entry name" value="Phosphoglycerate_kinase_CS"/>
</dbReference>
<dbReference type="InterPro" id="IPR015824">
    <property type="entry name" value="Phosphoglycerate_kinase_N"/>
</dbReference>
<dbReference type="InterPro" id="IPR036043">
    <property type="entry name" value="Phosphoglycerate_kinase_sf"/>
</dbReference>
<dbReference type="PANTHER" id="PTHR11406">
    <property type="entry name" value="PHOSPHOGLYCERATE KINASE"/>
    <property type="match status" value="1"/>
</dbReference>
<dbReference type="PANTHER" id="PTHR11406:SF23">
    <property type="entry name" value="PHOSPHOGLYCERATE KINASE 1, CHLOROPLASTIC-RELATED"/>
    <property type="match status" value="1"/>
</dbReference>
<dbReference type="Pfam" id="PF00162">
    <property type="entry name" value="PGK"/>
    <property type="match status" value="1"/>
</dbReference>
<dbReference type="PIRSF" id="PIRSF000724">
    <property type="entry name" value="Pgk"/>
    <property type="match status" value="1"/>
</dbReference>
<dbReference type="PRINTS" id="PR00477">
    <property type="entry name" value="PHGLYCKINASE"/>
</dbReference>
<dbReference type="SUPFAM" id="SSF53748">
    <property type="entry name" value="Phosphoglycerate kinase"/>
    <property type="match status" value="1"/>
</dbReference>
<dbReference type="PROSITE" id="PS00111">
    <property type="entry name" value="PGLYCERATE_KINASE"/>
    <property type="match status" value="1"/>
</dbReference>
<reference key="1">
    <citation type="journal article" date="2008" name="J. Biotechnol.">
        <title>The genome of Xanthomonas campestris pv. campestris B100 and its use for the reconstruction of metabolic pathways involved in xanthan biosynthesis.</title>
        <authorList>
            <person name="Vorhoelter F.-J."/>
            <person name="Schneiker S."/>
            <person name="Goesmann A."/>
            <person name="Krause L."/>
            <person name="Bekel T."/>
            <person name="Kaiser O."/>
            <person name="Linke B."/>
            <person name="Patschkowski T."/>
            <person name="Rueckert C."/>
            <person name="Schmid J."/>
            <person name="Sidhu V.K."/>
            <person name="Sieber V."/>
            <person name="Tauch A."/>
            <person name="Watt S.A."/>
            <person name="Weisshaar B."/>
            <person name="Becker A."/>
            <person name="Niehaus K."/>
            <person name="Puehler A."/>
        </authorList>
    </citation>
    <scope>NUCLEOTIDE SEQUENCE [LARGE SCALE GENOMIC DNA]</scope>
    <source>
        <strain>B100</strain>
    </source>
</reference>
<feature type="chain" id="PRO_1000096393" description="Phosphoglycerate kinase">
    <location>
        <begin position="1"/>
        <end position="391"/>
    </location>
</feature>
<feature type="binding site" evidence="1">
    <location>
        <begin position="21"/>
        <end position="23"/>
    </location>
    <ligand>
        <name>substrate</name>
    </ligand>
</feature>
<feature type="binding site" evidence="1">
    <location>
        <position position="36"/>
    </location>
    <ligand>
        <name>substrate</name>
    </ligand>
</feature>
<feature type="binding site" evidence="1">
    <location>
        <begin position="59"/>
        <end position="62"/>
    </location>
    <ligand>
        <name>substrate</name>
    </ligand>
</feature>
<feature type="binding site" evidence="1">
    <location>
        <position position="113"/>
    </location>
    <ligand>
        <name>substrate</name>
    </ligand>
</feature>
<feature type="binding site" evidence="1">
    <location>
        <position position="146"/>
    </location>
    <ligand>
        <name>substrate</name>
    </ligand>
</feature>
<feature type="binding site" evidence="1">
    <location>
        <position position="197"/>
    </location>
    <ligand>
        <name>ATP</name>
        <dbReference type="ChEBI" id="CHEBI:30616"/>
    </ligand>
</feature>
<feature type="binding site" evidence="1">
    <location>
        <position position="319"/>
    </location>
    <ligand>
        <name>ATP</name>
        <dbReference type="ChEBI" id="CHEBI:30616"/>
    </ligand>
</feature>
<feature type="binding site" evidence="1">
    <location>
        <begin position="345"/>
        <end position="348"/>
    </location>
    <ligand>
        <name>ATP</name>
        <dbReference type="ChEBI" id="CHEBI:30616"/>
    </ligand>
</feature>
<sequence length="391" mass="40738">MSIVRMTDLDLSGKRVLIRQDLNVPIDNGQITSEQRITASVPTIKLALEKGAAVMVTSHLGRPKEGTWSEEDSLAPVAARLTTLLGLDVPLVRDWVDGVDVAPGQVVLLENCRMNVGEGKDDEALARKYAALCDVFVMDAFGTAHRAQASTHGVIRFAPVAAGGPLLMAELDALAKALDNPAKPLLAIVAGSKVSTKLELLSNLVNKVDQLIVGGGIANTFIAAAGHDVGKSLSEPDLIPTANQIVADAKARGAEIPLPTDVVVAKQFLPDAEASVKSLDQVDADDLILDIGPQTAAHYAELIANAGTVVWNGPVGVFEFEPFSHGTETLARAIAASKAFSIAGGGDTLAAVDKYAIAKDVTYISTGGGAFLEFLEGKTLPAVAALEARGQ</sequence>
<comment type="catalytic activity">
    <reaction evidence="1">
        <text>(2R)-3-phosphoglycerate + ATP = (2R)-3-phospho-glyceroyl phosphate + ADP</text>
        <dbReference type="Rhea" id="RHEA:14801"/>
        <dbReference type="ChEBI" id="CHEBI:30616"/>
        <dbReference type="ChEBI" id="CHEBI:57604"/>
        <dbReference type="ChEBI" id="CHEBI:58272"/>
        <dbReference type="ChEBI" id="CHEBI:456216"/>
        <dbReference type="EC" id="2.7.2.3"/>
    </reaction>
</comment>
<comment type="pathway">
    <text evidence="1">Carbohydrate degradation; glycolysis; pyruvate from D-glyceraldehyde 3-phosphate: step 2/5.</text>
</comment>
<comment type="subunit">
    <text evidence="1">Monomer.</text>
</comment>
<comment type="subcellular location">
    <subcellularLocation>
        <location evidence="1">Cytoplasm</location>
    </subcellularLocation>
</comment>
<comment type="similarity">
    <text evidence="1">Belongs to the phosphoglycerate kinase family.</text>
</comment>
<protein>
    <recommendedName>
        <fullName evidence="1">Phosphoglycerate kinase</fullName>
        <ecNumber evidence="1">2.7.2.3</ecNumber>
    </recommendedName>
</protein>